<protein>
    <recommendedName>
        <fullName>Plectin</fullName>
        <shortName>PCN</shortName>
        <shortName>PLTN</shortName>
    </recommendedName>
    <alternativeName>
        <fullName>Plectin-1</fullName>
    </alternativeName>
</protein>
<reference key="1">
    <citation type="journal article" date="1991" name="J. Cell Biol.">
        <title>Cloning and sequencing of rat plectin indicates a 466-kD polypeptide chain with a three-domain structure based on a central alpha-helical coiled coil.</title>
        <authorList>
            <person name="Wiche G."/>
            <person name="Becker B."/>
            <person name="Luber K."/>
            <person name="Weitzer G."/>
            <person name="Castanon M.J."/>
            <person name="Hauptmann R."/>
            <person name="Stratowa C."/>
            <person name="Stewart M."/>
        </authorList>
    </citation>
    <scope>NUCLEOTIDE SEQUENCE [MRNA] (ISOFORM 1)</scope>
    <source>
        <tissue>Glial tumor</tissue>
    </source>
</reference>
<reference key="2">
    <citation type="journal article" date="1996" name="Proc. Natl. Acad. Sci. U.S.A.">
        <title>Human plectin: organization of the gene, sequence analysis, and chromosome localization (8q24).</title>
        <authorList>
            <person name="Liu C.-G."/>
            <person name="Maercker C."/>
            <person name="Castanon M.J."/>
            <person name="Hauptmann R."/>
            <person name="Wiche G."/>
        </authorList>
    </citation>
    <scope>SEQUENCE REVISION</scope>
    <source>
        <tissue>Glial tumor</tissue>
    </source>
</reference>
<reference key="3">
    <citation type="journal article" date="1997" name="Genomics">
        <title>Plectin transcript diversity: identification and tissue distribution of variants with distinct first coding exons and rodless isoforms.</title>
        <authorList>
            <person name="Elliott C.E."/>
            <person name="Becker B."/>
            <person name="Oehler S."/>
            <person name="Castanon M.J."/>
            <person name="Hauptmann R."/>
            <person name="Wiche G."/>
        </authorList>
    </citation>
    <scope>PARTIAL NUCLEOTIDE SEQUENCE [MRNA] (ISOFORMS 2; 3 AND 4)</scope>
    <scope>TISSUE SPECIFICITY</scope>
    <source>
        <tissue>Glial tumor</tissue>
    </source>
</reference>
<reference key="4">
    <citation type="journal article" date="2006" name="Proc. Natl. Acad. Sci. U.S.A.">
        <title>Quantitative phosphoproteomics of vasopressin-sensitive renal cells: regulation of aquaporin-2 phosphorylation at two sites.</title>
        <authorList>
            <person name="Hoffert J.D."/>
            <person name="Pisitkun T."/>
            <person name="Wang G."/>
            <person name="Shen R.-F."/>
            <person name="Knepper M.A."/>
        </authorList>
    </citation>
    <scope>PHOSPHORYLATION [LARGE SCALE ANALYSIS] AT THR-4033; SER-4387; SER-4388; SER-4389; SER-4392 AND SER-4394</scope>
    <scope>IDENTIFICATION BY MASS SPECTROMETRY [LARGE SCALE ANALYSIS]</scope>
</reference>
<reference key="5">
    <citation type="journal article" date="2011" name="Exp. Cell Res.">
        <title>Novel interactions of ankyrins-G at the costameres: the muscle-specific Obscurin/Titin-Binding-related Domain (OTBD) binds plectin and filamin C.</title>
        <authorList>
            <person name="Maiweilidan Y."/>
            <person name="Klauza I."/>
            <person name="Kordeli E."/>
        </authorList>
    </citation>
    <scope>INTERACTION WITH ANK3</scope>
</reference>
<reference key="6">
    <citation type="journal article" date="2012" name="Nat. Commun.">
        <title>Quantitative maps of protein phosphorylation sites across 14 different rat organs and tissues.</title>
        <authorList>
            <person name="Lundby A."/>
            <person name="Secher A."/>
            <person name="Lage K."/>
            <person name="Nordsborg N.B."/>
            <person name="Dmytriyev A."/>
            <person name="Lundby C."/>
            <person name="Olsen J.V."/>
        </authorList>
    </citation>
    <scope>PHOSPHORYLATION [LARGE SCALE ANALYSIS] AT SER-723; SER-1050; SER-1438; SER-2777; SER-3583; THR-4033; SER-4389; SER-4392; SER-4409; SER-4616 AND SER-4629</scope>
    <scope>PHOSPHORYLATION [LARGE SCALE ANALYSIS] AT SER-21 (ISOFORM 2)</scope>
    <scope>IDENTIFICATION BY MASS SPECTROMETRY [LARGE SCALE ANALYSIS]</scope>
</reference>
<dbReference type="EMBL" id="X59601">
    <property type="protein sequence ID" value="CAA42169.1"/>
    <property type="molecule type" value="mRNA"/>
</dbReference>
<dbReference type="EMBL" id="U96274">
    <property type="protein sequence ID" value="AAC53209.1"/>
    <property type="molecule type" value="mRNA"/>
</dbReference>
<dbReference type="EMBL" id="U96275">
    <property type="protein sequence ID" value="AAC53210.1"/>
    <property type="molecule type" value="mRNA"/>
</dbReference>
<dbReference type="EMBL" id="U96276">
    <property type="protein sequence ID" value="AAC53211.1"/>
    <property type="molecule type" value="mRNA"/>
</dbReference>
<dbReference type="PIR" id="A39638">
    <property type="entry name" value="A39638"/>
</dbReference>
<dbReference type="SMR" id="P30427"/>
<dbReference type="FunCoup" id="P30427">
    <property type="interactions" value="734"/>
</dbReference>
<dbReference type="IntAct" id="P30427">
    <property type="interactions" value="4"/>
</dbReference>
<dbReference type="MINT" id="P30427"/>
<dbReference type="STRING" id="10116.ENSRNOP00000073548"/>
<dbReference type="CarbonylDB" id="P30427"/>
<dbReference type="GlyGen" id="P30427">
    <property type="glycosylation" value="1 site"/>
</dbReference>
<dbReference type="iPTMnet" id="P30427"/>
<dbReference type="PhosphoSitePlus" id="P30427"/>
<dbReference type="jPOST" id="P30427"/>
<dbReference type="PaxDb" id="10116-ENSRNOP00000040018"/>
<dbReference type="UCSC" id="RGD:621649">
    <molecule id="P30427-1"/>
    <property type="organism name" value="rat"/>
</dbReference>
<dbReference type="AGR" id="RGD:621649"/>
<dbReference type="RGD" id="621649">
    <property type="gene designation" value="Plec"/>
</dbReference>
<dbReference type="eggNOG" id="KOG0516">
    <property type="taxonomic scope" value="Eukaryota"/>
</dbReference>
<dbReference type="InParanoid" id="P30427"/>
<dbReference type="PhylomeDB" id="P30427"/>
<dbReference type="Reactome" id="R-RNO-264870">
    <property type="pathway name" value="Caspase-mediated cleavage of cytoskeletal proteins"/>
</dbReference>
<dbReference type="Reactome" id="R-RNO-446107">
    <property type="pathway name" value="Type I hemidesmosome assembly"/>
</dbReference>
<dbReference type="PRO" id="PR:P30427"/>
<dbReference type="Proteomes" id="UP000002494">
    <property type="component" value="Unplaced"/>
</dbReference>
<dbReference type="GO" id="GO:0016324">
    <property type="term" value="C:apical plasma membrane"/>
    <property type="evidence" value="ECO:0000314"/>
    <property type="project" value="RGD"/>
</dbReference>
<dbReference type="GO" id="GO:0030424">
    <property type="term" value="C:axon"/>
    <property type="evidence" value="ECO:0000266"/>
    <property type="project" value="RGD"/>
</dbReference>
<dbReference type="GO" id="GO:0009925">
    <property type="term" value="C:basal plasma membrane"/>
    <property type="evidence" value="ECO:0000314"/>
    <property type="project" value="RGD"/>
</dbReference>
<dbReference type="GO" id="GO:0005903">
    <property type="term" value="C:brush border"/>
    <property type="evidence" value="ECO:0000266"/>
    <property type="project" value="RGD"/>
</dbReference>
<dbReference type="GO" id="GO:0071944">
    <property type="term" value="C:cell periphery"/>
    <property type="evidence" value="ECO:0000266"/>
    <property type="project" value="RGD"/>
</dbReference>
<dbReference type="GO" id="GO:0043292">
    <property type="term" value="C:contractile muscle fiber"/>
    <property type="evidence" value="ECO:0000266"/>
    <property type="project" value="RGD"/>
</dbReference>
<dbReference type="GO" id="GO:0043034">
    <property type="term" value="C:costamere"/>
    <property type="evidence" value="ECO:0000304"/>
    <property type="project" value="BHF-UCL"/>
</dbReference>
<dbReference type="GO" id="GO:0005737">
    <property type="term" value="C:cytoplasm"/>
    <property type="evidence" value="ECO:0000266"/>
    <property type="project" value="RGD"/>
</dbReference>
<dbReference type="GO" id="GO:0030425">
    <property type="term" value="C:dendrite"/>
    <property type="evidence" value="ECO:0000266"/>
    <property type="project" value="RGD"/>
</dbReference>
<dbReference type="GO" id="GO:0005925">
    <property type="term" value="C:focal adhesion"/>
    <property type="evidence" value="ECO:0000318"/>
    <property type="project" value="GO_Central"/>
</dbReference>
<dbReference type="GO" id="GO:0030056">
    <property type="term" value="C:hemidesmosome"/>
    <property type="evidence" value="ECO:0000250"/>
    <property type="project" value="UniProtKB"/>
</dbReference>
<dbReference type="GO" id="GO:0005741">
    <property type="term" value="C:mitochondrial outer membrane"/>
    <property type="evidence" value="ECO:0000266"/>
    <property type="project" value="RGD"/>
</dbReference>
<dbReference type="GO" id="GO:0043209">
    <property type="term" value="C:myelin sheath"/>
    <property type="evidence" value="ECO:0000266"/>
    <property type="project" value="RGD"/>
</dbReference>
<dbReference type="GO" id="GO:0030016">
    <property type="term" value="C:myofibril"/>
    <property type="evidence" value="ECO:0000266"/>
    <property type="project" value="RGD"/>
</dbReference>
<dbReference type="GO" id="GO:0048471">
    <property type="term" value="C:perinuclear region of cytoplasm"/>
    <property type="evidence" value="ECO:0000314"/>
    <property type="project" value="RGD"/>
</dbReference>
<dbReference type="GO" id="GO:0002102">
    <property type="term" value="C:podosome"/>
    <property type="evidence" value="ECO:0000250"/>
    <property type="project" value="UniProtKB"/>
</dbReference>
<dbReference type="GO" id="GO:0042383">
    <property type="term" value="C:sarcolemma"/>
    <property type="evidence" value="ECO:0000314"/>
    <property type="project" value="BHF-UCL"/>
</dbReference>
<dbReference type="GO" id="GO:0016528">
    <property type="term" value="C:sarcoplasm"/>
    <property type="evidence" value="ECO:0000314"/>
    <property type="project" value="BHF-UCL"/>
</dbReference>
<dbReference type="GO" id="GO:0030018">
    <property type="term" value="C:Z disc"/>
    <property type="evidence" value="ECO:0000266"/>
    <property type="project" value="RGD"/>
</dbReference>
<dbReference type="GO" id="GO:0003779">
    <property type="term" value="F:actin binding"/>
    <property type="evidence" value="ECO:0000266"/>
    <property type="project" value="RGD"/>
</dbReference>
<dbReference type="GO" id="GO:0051015">
    <property type="term" value="F:actin filament binding"/>
    <property type="evidence" value="ECO:0000266"/>
    <property type="project" value="RGD"/>
</dbReference>
<dbReference type="GO" id="GO:0030506">
    <property type="term" value="F:ankyrin binding"/>
    <property type="evidence" value="ECO:0000353"/>
    <property type="project" value="BHF-UCL"/>
</dbReference>
<dbReference type="GO" id="GO:0008092">
    <property type="term" value="F:cytoskeletal protein binding"/>
    <property type="evidence" value="ECO:0000314"/>
    <property type="project" value="RGD"/>
</dbReference>
<dbReference type="GO" id="GO:0002162">
    <property type="term" value="F:dystroglycan binding"/>
    <property type="evidence" value="ECO:0000266"/>
    <property type="project" value="RGD"/>
</dbReference>
<dbReference type="GO" id="GO:0042802">
    <property type="term" value="F:identical protein binding"/>
    <property type="evidence" value="ECO:0000266"/>
    <property type="project" value="RGD"/>
</dbReference>
<dbReference type="GO" id="GO:0005200">
    <property type="term" value="F:structural constituent of cytoskeleton"/>
    <property type="evidence" value="ECO:0000315"/>
    <property type="project" value="RGD"/>
</dbReference>
<dbReference type="GO" id="GO:0030036">
    <property type="term" value="P:actin cytoskeleton organization"/>
    <property type="evidence" value="ECO:0000266"/>
    <property type="project" value="RGD"/>
</dbReference>
<dbReference type="GO" id="GO:0007015">
    <property type="term" value="P:actin filament organization"/>
    <property type="evidence" value="ECO:0000266"/>
    <property type="project" value="RGD"/>
</dbReference>
<dbReference type="GO" id="GO:2000689">
    <property type="term" value="P:actomyosin contractile ring assembly actin filament organization"/>
    <property type="evidence" value="ECO:0000266"/>
    <property type="project" value="RGD"/>
</dbReference>
<dbReference type="GO" id="GO:0034332">
    <property type="term" value="P:adherens junction organization"/>
    <property type="evidence" value="ECO:0000266"/>
    <property type="project" value="RGD"/>
</dbReference>
<dbReference type="GO" id="GO:0055013">
    <property type="term" value="P:cardiac muscle cell development"/>
    <property type="evidence" value="ECO:0000266"/>
    <property type="project" value="RGD"/>
</dbReference>
<dbReference type="GO" id="GO:0000902">
    <property type="term" value="P:cell morphogenesis"/>
    <property type="evidence" value="ECO:0000266"/>
    <property type="project" value="RGD"/>
</dbReference>
<dbReference type="GO" id="GO:0048870">
    <property type="term" value="P:cell motility"/>
    <property type="evidence" value="ECO:0000266"/>
    <property type="project" value="RGD"/>
</dbReference>
<dbReference type="GO" id="GO:0071498">
    <property type="term" value="P:cellular response to fluid shear stress"/>
    <property type="evidence" value="ECO:0000266"/>
    <property type="project" value="RGD"/>
</dbReference>
<dbReference type="GO" id="GO:0071464">
    <property type="term" value="P:cellular response to hydrostatic pressure"/>
    <property type="evidence" value="ECO:0000266"/>
    <property type="project" value="RGD"/>
</dbReference>
<dbReference type="GO" id="GO:0071260">
    <property type="term" value="P:cellular response to mechanical stimulus"/>
    <property type="evidence" value="ECO:0000266"/>
    <property type="project" value="RGD"/>
</dbReference>
<dbReference type="GO" id="GO:0030855">
    <property type="term" value="P:epithelial cell differentiation"/>
    <property type="evidence" value="ECO:0000270"/>
    <property type="project" value="RGD"/>
</dbReference>
<dbReference type="GO" id="GO:0061436">
    <property type="term" value="P:establishment of skin barrier"/>
    <property type="evidence" value="ECO:0000266"/>
    <property type="project" value="RGD"/>
</dbReference>
<dbReference type="GO" id="GO:0007565">
    <property type="term" value="P:female pregnancy"/>
    <property type="evidence" value="ECO:0000270"/>
    <property type="project" value="RGD"/>
</dbReference>
<dbReference type="GO" id="GO:0010761">
    <property type="term" value="P:fibroblast migration"/>
    <property type="evidence" value="ECO:0000266"/>
    <property type="project" value="RGD"/>
</dbReference>
<dbReference type="GO" id="GO:0010467">
    <property type="term" value="P:gene expression"/>
    <property type="evidence" value="ECO:0000266"/>
    <property type="project" value="RGD"/>
</dbReference>
<dbReference type="GO" id="GO:0031581">
    <property type="term" value="P:hemidesmosome assembly"/>
    <property type="evidence" value="ECO:0000250"/>
    <property type="project" value="UniProtKB"/>
</dbReference>
<dbReference type="GO" id="GO:0045104">
    <property type="term" value="P:intermediate filament cytoskeleton organization"/>
    <property type="evidence" value="ECO:0000266"/>
    <property type="project" value="RGD"/>
</dbReference>
<dbReference type="GO" id="GO:0045109">
    <property type="term" value="P:intermediate filament organization"/>
    <property type="evidence" value="ECO:0000266"/>
    <property type="project" value="RGD"/>
</dbReference>
<dbReference type="GO" id="GO:0003334">
    <property type="term" value="P:keratinocyte development"/>
    <property type="evidence" value="ECO:0000266"/>
    <property type="project" value="RGD"/>
</dbReference>
<dbReference type="GO" id="GO:0030216">
    <property type="term" value="P:keratinocyte differentiation"/>
    <property type="evidence" value="ECO:0000266"/>
    <property type="project" value="RGD"/>
</dbReference>
<dbReference type="GO" id="GO:0002522">
    <property type="term" value="P:leukocyte migration involved in immune response"/>
    <property type="evidence" value="ECO:0000266"/>
    <property type="project" value="RGD"/>
</dbReference>
<dbReference type="GO" id="GO:0007005">
    <property type="term" value="P:mitochondrion organization"/>
    <property type="evidence" value="ECO:0000266"/>
    <property type="project" value="RGD"/>
</dbReference>
<dbReference type="GO" id="GO:0035264">
    <property type="term" value="P:multicellular organism growth"/>
    <property type="evidence" value="ECO:0000266"/>
    <property type="project" value="RGD"/>
</dbReference>
<dbReference type="GO" id="GO:0022011">
    <property type="term" value="P:myelination in peripheral nervous system"/>
    <property type="evidence" value="ECO:0000266"/>
    <property type="project" value="RGD"/>
</dbReference>
<dbReference type="GO" id="GO:0045445">
    <property type="term" value="P:myoblast differentiation"/>
    <property type="evidence" value="ECO:0000266"/>
    <property type="project" value="RGD"/>
</dbReference>
<dbReference type="GO" id="GO:0006997">
    <property type="term" value="P:nucleus organization"/>
    <property type="evidence" value="ECO:0000266"/>
    <property type="project" value="RGD"/>
</dbReference>
<dbReference type="GO" id="GO:0032287">
    <property type="term" value="P:peripheral nervous system myelin maintenance"/>
    <property type="evidence" value="ECO:0000266"/>
    <property type="project" value="RGD"/>
</dbReference>
<dbReference type="GO" id="GO:0008104">
    <property type="term" value="P:protein localization"/>
    <property type="evidence" value="ECO:0000266"/>
    <property type="project" value="RGD"/>
</dbReference>
<dbReference type="GO" id="GO:0043933">
    <property type="term" value="P:protein-containing complex organization"/>
    <property type="evidence" value="ECO:0000266"/>
    <property type="project" value="RGD"/>
</dbReference>
<dbReference type="GO" id="GO:0043114">
    <property type="term" value="P:regulation of vascular permeability"/>
    <property type="evidence" value="ECO:0000266"/>
    <property type="project" value="RGD"/>
</dbReference>
<dbReference type="GO" id="GO:0022904">
    <property type="term" value="P:respiratory electron transport chain"/>
    <property type="evidence" value="ECO:0000266"/>
    <property type="project" value="RGD"/>
</dbReference>
<dbReference type="GO" id="GO:0032094">
    <property type="term" value="P:response to food"/>
    <property type="evidence" value="ECO:0000266"/>
    <property type="project" value="RGD"/>
</dbReference>
<dbReference type="GO" id="GO:0007584">
    <property type="term" value="P:response to nutrient"/>
    <property type="evidence" value="ECO:0000314"/>
    <property type="project" value="RGD"/>
</dbReference>
<dbReference type="GO" id="GO:0045214">
    <property type="term" value="P:sarcomere organization"/>
    <property type="evidence" value="ECO:0000266"/>
    <property type="project" value="RGD"/>
</dbReference>
<dbReference type="GO" id="GO:0048741">
    <property type="term" value="P:skeletal muscle fiber development"/>
    <property type="evidence" value="ECO:0000266"/>
    <property type="project" value="RGD"/>
</dbReference>
<dbReference type="GO" id="GO:0007519">
    <property type="term" value="P:skeletal muscle tissue development"/>
    <property type="evidence" value="ECO:0000266"/>
    <property type="project" value="RGD"/>
</dbReference>
<dbReference type="GO" id="GO:0014866">
    <property type="term" value="P:skeletal myofibril assembly"/>
    <property type="evidence" value="ECO:0000266"/>
    <property type="project" value="RGD"/>
</dbReference>
<dbReference type="GO" id="GO:0043588">
    <property type="term" value="P:skin development"/>
    <property type="evidence" value="ECO:0000266"/>
    <property type="project" value="RGD"/>
</dbReference>
<dbReference type="GO" id="GO:0010818">
    <property type="term" value="P:T cell chemotaxis"/>
    <property type="evidence" value="ECO:0000266"/>
    <property type="project" value="RGD"/>
</dbReference>
<dbReference type="GO" id="GO:0120193">
    <property type="term" value="P:tight junction organization"/>
    <property type="evidence" value="ECO:0000266"/>
    <property type="project" value="RGD"/>
</dbReference>
<dbReference type="GO" id="GO:0019226">
    <property type="term" value="P:transmission of nerve impulse"/>
    <property type="evidence" value="ECO:0000266"/>
    <property type="project" value="RGD"/>
</dbReference>
<dbReference type="GO" id="GO:0042060">
    <property type="term" value="P:wound healing"/>
    <property type="evidence" value="ECO:0000318"/>
    <property type="project" value="GO_Central"/>
</dbReference>
<dbReference type="CDD" id="cd21188">
    <property type="entry name" value="CH_PLEC-like_rpt1"/>
    <property type="match status" value="1"/>
</dbReference>
<dbReference type="CDD" id="cd21238">
    <property type="entry name" value="CH_PLEC_rpt2"/>
    <property type="match status" value="1"/>
</dbReference>
<dbReference type="CDD" id="cd00176">
    <property type="entry name" value="SPEC"/>
    <property type="match status" value="2"/>
</dbReference>
<dbReference type="FunFam" id="1.20.58.60:FF:000009">
    <property type="entry name" value="dystonin isoform X1"/>
    <property type="match status" value="1"/>
</dbReference>
<dbReference type="FunFam" id="1.10.418.10:FF:000002">
    <property type="entry name" value="Microtubule-actin cross-linking factor 1"/>
    <property type="match status" value="1"/>
</dbReference>
<dbReference type="FunFam" id="1.20.58.60:FF:000036">
    <property type="entry name" value="Plectin a"/>
    <property type="match status" value="1"/>
</dbReference>
<dbReference type="FunFam" id="1.20.58.60:FF:000076">
    <property type="entry name" value="Plectin a"/>
    <property type="match status" value="1"/>
</dbReference>
<dbReference type="FunFam" id="2.30.30.40:FF:000064">
    <property type="entry name" value="Plectin a"/>
    <property type="match status" value="1"/>
</dbReference>
<dbReference type="FunFam" id="3.30.160.780:FF:000001">
    <property type="entry name" value="Plectin a"/>
    <property type="match status" value="1"/>
</dbReference>
<dbReference type="FunFam" id="3.90.1290.10:FF:000001">
    <property type="entry name" value="Plectin a"/>
    <property type="match status" value="5"/>
</dbReference>
<dbReference type="FunFam" id="3.90.1290.10:FF:000002">
    <property type="entry name" value="Plectin a"/>
    <property type="match status" value="1"/>
</dbReference>
<dbReference type="FunFam" id="1.10.10.10:FF:000388">
    <property type="entry name" value="plectin isoform X1"/>
    <property type="match status" value="1"/>
</dbReference>
<dbReference type="FunFam" id="1.20.58.60:FF:000065">
    <property type="entry name" value="plectin isoform X1"/>
    <property type="match status" value="1"/>
</dbReference>
<dbReference type="FunFam" id="1.10.418.10:FF:000029">
    <property type="entry name" value="plectin isoform X2"/>
    <property type="match status" value="1"/>
</dbReference>
<dbReference type="FunFam" id="1.20.58.60:FF:000010">
    <property type="entry name" value="plectin isoform X2"/>
    <property type="match status" value="1"/>
</dbReference>
<dbReference type="Gene3D" id="1.20.58.1060">
    <property type="match status" value="1"/>
</dbReference>
<dbReference type="Gene3D" id="1.20.58.60">
    <property type="match status" value="5"/>
</dbReference>
<dbReference type="Gene3D" id="3.30.160.780">
    <property type="match status" value="1"/>
</dbReference>
<dbReference type="Gene3D" id="1.10.418.10">
    <property type="entry name" value="Calponin-like domain"/>
    <property type="match status" value="2"/>
</dbReference>
<dbReference type="Gene3D" id="3.90.1290.10">
    <property type="entry name" value="Plakin repeat"/>
    <property type="match status" value="6"/>
</dbReference>
<dbReference type="Gene3D" id="2.30.30.40">
    <property type="entry name" value="SH3 Domains"/>
    <property type="match status" value="1"/>
</dbReference>
<dbReference type="Gene3D" id="1.10.10.10">
    <property type="entry name" value="Winged helix-like DNA-binding domain superfamily/Winged helix DNA-binding domain"/>
    <property type="match status" value="1"/>
</dbReference>
<dbReference type="InterPro" id="IPR001589">
    <property type="entry name" value="Actinin_actin-bd_CS"/>
</dbReference>
<dbReference type="InterPro" id="IPR001715">
    <property type="entry name" value="CH_dom"/>
</dbReference>
<dbReference type="InterPro" id="IPR036872">
    <property type="entry name" value="CH_dom_sf"/>
</dbReference>
<dbReference type="InterPro" id="IPR041615">
    <property type="entry name" value="Desmoplakin_SH3"/>
</dbReference>
<dbReference type="InterPro" id="IPR041573">
    <property type="entry name" value="Desmoplakin_Spectrin-like"/>
</dbReference>
<dbReference type="InterPro" id="IPR049538">
    <property type="entry name" value="PCN-like_spectrin-like_rpt"/>
</dbReference>
<dbReference type="InterPro" id="IPR043197">
    <property type="entry name" value="Plakin"/>
</dbReference>
<dbReference type="InterPro" id="IPR035915">
    <property type="entry name" value="Plakin_repeat_sf"/>
</dbReference>
<dbReference type="InterPro" id="IPR005326">
    <property type="entry name" value="Plectin_eS10_N"/>
</dbReference>
<dbReference type="InterPro" id="IPR001101">
    <property type="entry name" value="Plectin_repeat"/>
</dbReference>
<dbReference type="InterPro" id="IPR001452">
    <property type="entry name" value="SH3_domain"/>
</dbReference>
<dbReference type="InterPro" id="IPR018159">
    <property type="entry name" value="Spectrin/alpha-actinin"/>
</dbReference>
<dbReference type="InterPro" id="IPR036388">
    <property type="entry name" value="WH-like_DNA-bd_sf"/>
</dbReference>
<dbReference type="PANTHER" id="PTHR23169">
    <property type="entry name" value="ENVOPLAKIN"/>
    <property type="match status" value="1"/>
</dbReference>
<dbReference type="PANTHER" id="PTHR23169:SF21">
    <property type="entry name" value="EPIPLAKIN"/>
    <property type="match status" value="1"/>
</dbReference>
<dbReference type="Pfam" id="PF00307">
    <property type="entry name" value="CH"/>
    <property type="match status" value="2"/>
</dbReference>
<dbReference type="Pfam" id="PF00681">
    <property type="entry name" value="Plectin"/>
    <property type="match status" value="19"/>
</dbReference>
<dbReference type="Pfam" id="PF03501">
    <property type="entry name" value="S10_plectin"/>
    <property type="match status" value="1"/>
</dbReference>
<dbReference type="Pfam" id="PF17902">
    <property type="entry name" value="SH3_10"/>
    <property type="match status" value="1"/>
</dbReference>
<dbReference type="Pfam" id="PF18373">
    <property type="entry name" value="Spectrin_2"/>
    <property type="match status" value="1"/>
</dbReference>
<dbReference type="Pfam" id="PF21019">
    <property type="entry name" value="Spectrin_3"/>
    <property type="match status" value="1"/>
</dbReference>
<dbReference type="Pfam" id="PF21020">
    <property type="entry name" value="Spectrin_4"/>
    <property type="match status" value="1"/>
</dbReference>
<dbReference type="Pfam" id="PF21097">
    <property type="entry name" value="SR_plectin_7"/>
    <property type="match status" value="1"/>
</dbReference>
<dbReference type="SMART" id="SM00033">
    <property type="entry name" value="CH"/>
    <property type="match status" value="2"/>
</dbReference>
<dbReference type="SMART" id="SM00250">
    <property type="entry name" value="PLEC"/>
    <property type="match status" value="34"/>
</dbReference>
<dbReference type="SMART" id="SM00150">
    <property type="entry name" value="SPEC"/>
    <property type="match status" value="6"/>
</dbReference>
<dbReference type="SUPFAM" id="SSF47576">
    <property type="entry name" value="Calponin-homology domain, CH-domain"/>
    <property type="match status" value="1"/>
</dbReference>
<dbReference type="SUPFAM" id="SSF75399">
    <property type="entry name" value="Plakin repeat"/>
    <property type="match status" value="7"/>
</dbReference>
<dbReference type="SUPFAM" id="SSF46966">
    <property type="entry name" value="Spectrin repeat"/>
    <property type="match status" value="5"/>
</dbReference>
<dbReference type="PROSITE" id="PS00020">
    <property type="entry name" value="ACTININ_2"/>
    <property type="match status" value="1"/>
</dbReference>
<dbReference type="PROSITE" id="PS50021">
    <property type="entry name" value="CH"/>
    <property type="match status" value="2"/>
</dbReference>
<dbReference type="PROSITE" id="PS50002">
    <property type="entry name" value="SH3"/>
    <property type="match status" value="1"/>
</dbReference>
<proteinExistence type="evidence at protein level"/>
<feature type="chain" id="PRO_0000078137" description="Plectin">
    <location>
        <begin position="1"/>
        <end position="4687"/>
    </location>
</feature>
<feature type="domain" description="Calponin-homology (CH) 1" evidence="6">
    <location>
        <begin position="185"/>
        <end position="288"/>
    </location>
</feature>
<feature type="domain" description="Calponin-homology (CH) 2" evidence="6">
    <location>
        <begin position="301"/>
        <end position="406"/>
    </location>
</feature>
<feature type="repeat" description="Spectrin 1">
    <location>
        <begin position="648"/>
        <end position="722"/>
    </location>
</feature>
<feature type="repeat" description="Spectrin 2">
    <location>
        <begin position="743"/>
        <end position="827"/>
    </location>
</feature>
<feature type="repeat" description="Spectrin 3">
    <location>
        <begin position="840"/>
        <end position="933"/>
    </location>
</feature>
<feature type="domain" description="SH3" evidence="7">
    <location>
        <begin position="944"/>
        <end position="1001"/>
    </location>
</feature>
<feature type="repeat" description="Spectrin 4">
    <location>
        <begin position="1318"/>
        <end position="1418"/>
    </location>
</feature>
<feature type="repeat" description="Plectin 1">
    <location>
        <begin position="2791"/>
        <end position="2828"/>
    </location>
</feature>
<feature type="repeat" description="Plectin 2">
    <location>
        <begin position="2829"/>
        <end position="2866"/>
    </location>
</feature>
<feature type="repeat" description="Plectin 3">
    <location>
        <begin position="2867"/>
        <end position="2904"/>
    </location>
</feature>
<feature type="repeat" description="Plectin 4">
    <location>
        <begin position="2905"/>
        <end position="2942"/>
    </location>
</feature>
<feature type="repeat" description="Plectin 5">
    <location>
        <begin position="2943"/>
        <end position="2980"/>
    </location>
</feature>
<feature type="repeat" description="Plectin 6">
    <location>
        <begin position="2984"/>
        <end position="3018"/>
    </location>
</feature>
<feature type="repeat" description="Plectin 7">
    <location>
        <begin position="3119"/>
        <end position="3156"/>
    </location>
</feature>
<feature type="repeat" description="Plectin 8">
    <location>
        <begin position="3157"/>
        <end position="3194"/>
    </location>
</feature>
<feature type="repeat" description="Plectin 9">
    <location>
        <begin position="3195"/>
        <end position="3232"/>
    </location>
</feature>
<feature type="repeat" description="Plectin 10">
    <location>
        <begin position="3233"/>
        <end position="3270"/>
    </location>
</feature>
<feature type="repeat" description="Plectin 11">
    <location>
        <begin position="3271"/>
        <end position="3308"/>
    </location>
</feature>
<feature type="repeat" description="Plectin 12">
    <location>
        <begin position="3311"/>
        <end position="3346"/>
    </location>
</feature>
<feature type="repeat" description="Plectin 13">
    <location>
        <begin position="3488"/>
        <end position="3525"/>
    </location>
</feature>
<feature type="repeat" description="Plectin 14">
    <location>
        <begin position="3526"/>
        <end position="3563"/>
    </location>
</feature>
<feature type="repeat" description="Plectin 15">
    <location>
        <begin position="3564"/>
        <end position="3601"/>
    </location>
</feature>
<feature type="repeat" description="Plectin 16">
    <location>
        <begin position="3602"/>
        <end position="3639"/>
    </location>
</feature>
<feature type="repeat" description="Plectin 17">
    <location>
        <begin position="3643"/>
        <end position="3677"/>
    </location>
</feature>
<feature type="repeat" description="Plectin 18">
    <location>
        <begin position="3823"/>
        <end position="3860"/>
    </location>
</feature>
<feature type="repeat" description="Plectin 19">
    <location>
        <begin position="3861"/>
        <end position="3898"/>
    </location>
</feature>
<feature type="repeat" description="Plectin 20">
    <location>
        <begin position="3899"/>
        <end position="3936"/>
    </location>
</feature>
<feature type="repeat" description="Plectin 21">
    <location>
        <begin position="3937"/>
        <end position="3974"/>
    </location>
</feature>
<feature type="repeat" description="Plectin 22">
    <location>
        <begin position="3978"/>
        <end position="4011"/>
    </location>
</feature>
<feature type="repeat" description="Plectin 23">
    <location>
        <begin position="4066"/>
        <end position="4103"/>
    </location>
</feature>
<feature type="repeat" description="Plectin 24">
    <location>
        <begin position="4104"/>
        <end position="4141"/>
    </location>
</feature>
<feature type="repeat" description="Plectin 25">
    <location>
        <begin position="4142"/>
        <end position="4179"/>
    </location>
</feature>
<feature type="repeat" description="Plectin 26">
    <location>
        <begin position="4180"/>
        <end position="4217"/>
    </location>
</feature>
<feature type="repeat" description="Plectin 27">
    <location>
        <begin position="4221"/>
        <end position="4255"/>
    </location>
</feature>
<feature type="repeat" description="Plectin 28">
    <location>
        <begin position="4268"/>
        <end position="4308"/>
    </location>
</feature>
<feature type="repeat" description="Plectin 29">
    <location>
        <begin position="4411"/>
        <end position="4448"/>
    </location>
</feature>
<feature type="repeat" description="Plectin 30">
    <location>
        <begin position="4449"/>
        <end position="4486"/>
    </location>
</feature>
<feature type="repeat" description="Plectin 31">
    <location>
        <begin position="4487"/>
        <end position="4524"/>
    </location>
</feature>
<feature type="repeat" description="Plectin 32">
    <location>
        <begin position="4525"/>
        <end position="4562"/>
    </location>
</feature>
<feature type="repeat" description="Plectin 33">
    <location>
        <begin position="4563"/>
        <end position="4600"/>
    </location>
</feature>
<feature type="region of interest" description="Globular 1">
    <location>
        <begin position="1"/>
        <end position="1473"/>
    </location>
</feature>
<feature type="region of interest" description="Disordered" evidence="8">
    <location>
        <begin position="111"/>
        <end position="158"/>
    </location>
</feature>
<feature type="region of interest" description="Actin-binding">
    <location>
        <begin position="181"/>
        <end position="406"/>
    </location>
</feature>
<feature type="region of interest" description="Central fibrous rod domain">
    <location>
        <begin position="1474"/>
        <end position="2758"/>
    </location>
</feature>
<feature type="region of interest" description="Disordered" evidence="8">
    <location>
        <begin position="1623"/>
        <end position="1647"/>
    </location>
</feature>
<feature type="region of interest" description="Disordered" evidence="8">
    <location>
        <begin position="1741"/>
        <end position="1764"/>
    </location>
</feature>
<feature type="region of interest" description="Disordered" evidence="8">
    <location>
        <begin position="1796"/>
        <end position="1846"/>
    </location>
</feature>
<feature type="region of interest" description="Disordered" evidence="8">
    <location>
        <begin position="2096"/>
        <end position="2139"/>
    </location>
</feature>
<feature type="region of interest" description="Disordered" evidence="8">
    <location>
        <begin position="2164"/>
        <end position="2188"/>
    </location>
</feature>
<feature type="region of interest" description="Disordered" evidence="8">
    <location>
        <begin position="2218"/>
        <end position="2307"/>
    </location>
</feature>
<feature type="region of interest" description="Disordered" evidence="8">
    <location>
        <begin position="2671"/>
        <end position="2710"/>
    </location>
</feature>
<feature type="region of interest" description="Globular 2">
    <location>
        <begin position="2759"/>
        <end position="4687"/>
    </location>
</feature>
<feature type="region of interest" description="Binding to intermediate filaments">
    <location>
        <begin position="4253"/>
        <end position="4303"/>
    </location>
</feature>
<feature type="region of interest" description="Disordered" evidence="8">
    <location>
        <begin position="4614"/>
        <end position="4687"/>
    </location>
</feature>
<feature type="region of interest" description="4 X 4 AA tandem repeats of G-S-R-X">
    <location>
        <begin position="4628"/>
        <end position="4643"/>
    </location>
</feature>
<feature type="coiled-coil region" evidence="5">
    <location>
        <begin position="1472"/>
        <end position="1692"/>
    </location>
</feature>
<feature type="coiled-coil region" evidence="5">
    <location>
        <begin position="1724"/>
        <end position="2760"/>
    </location>
</feature>
<feature type="compositionally biased region" description="Basic and acidic residues" evidence="8">
    <location>
        <begin position="137"/>
        <end position="154"/>
    </location>
</feature>
<feature type="compositionally biased region" description="Basic and acidic residues" evidence="8">
    <location>
        <begin position="1801"/>
        <end position="1839"/>
    </location>
</feature>
<feature type="compositionally biased region" description="Basic and acidic residues" evidence="8">
    <location>
        <begin position="2096"/>
        <end position="2111"/>
    </location>
</feature>
<feature type="compositionally biased region" description="Basic and acidic residues" evidence="8">
    <location>
        <begin position="2119"/>
        <end position="2131"/>
    </location>
</feature>
<feature type="compositionally biased region" description="Low complexity" evidence="8">
    <location>
        <begin position="2173"/>
        <end position="2182"/>
    </location>
</feature>
<feature type="compositionally biased region" description="Basic and acidic residues" evidence="8">
    <location>
        <begin position="2218"/>
        <end position="2261"/>
    </location>
</feature>
<feature type="compositionally biased region" description="Low complexity" evidence="8">
    <location>
        <begin position="2262"/>
        <end position="2275"/>
    </location>
</feature>
<feature type="compositionally biased region" description="Basic and acidic residues" evidence="8">
    <location>
        <begin position="2276"/>
        <end position="2291"/>
    </location>
</feature>
<feature type="compositionally biased region" description="Basic and acidic residues" evidence="8">
    <location>
        <begin position="2682"/>
        <end position="2710"/>
    </location>
</feature>
<feature type="compositionally biased region" description="Low complexity" evidence="8">
    <location>
        <begin position="4614"/>
        <end position="4674"/>
    </location>
</feature>
<feature type="modified residue" description="Phosphoserine" evidence="13">
    <location>
        <position position="723"/>
    </location>
</feature>
<feature type="modified residue" description="Phosphothreonine" evidence="4">
    <location>
        <position position="818"/>
    </location>
</feature>
<feature type="modified residue" description="Phosphoserine" evidence="13">
    <location>
        <position position="1050"/>
    </location>
</feature>
<feature type="modified residue" description="Phosphoserine" evidence="13">
    <location>
        <position position="1438"/>
    </location>
</feature>
<feature type="modified residue" description="Phosphoserine" evidence="2">
    <location>
        <position position="1724"/>
    </location>
</feature>
<feature type="modified residue" description="N6-acetyllysine" evidence="4">
    <location>
        <position position="1728"/>
    </location>
</feature>
<feature type="modified residue" description="Phosphoserine" evidence="2">
    <location>
        <position position="2634"/>
    </location>
</feature>
<feature type="modified residue" description="N6-acetyllysine" evidence="4">
    <location>
        <position position="2639"/>
    </location>
</feature>
<feature type="modified residue" description="Phosphoserine" evidence="13">
    <location>
        <position position="2777"/>
    </location>
</feature>
<feature type="modified residue" description="Phosphotyrosine" evidence="4">
    <location>
        <position position="2784"/>
    </location>
</feature>
<feature type="modified residue" description="Phosphoserine" evidence="2">
    <location>
        <position position="2805"/>
    </location>
</feature>
<feature type="modified residue" description="Phosphothreonine" evidence="2">
    <location>
        <position position="2889"/>
    </location>
</feature>
<feature type="modified residue" description="Phosphotyrosine" evidence="4">
    <location>
        <position position="3036"/>
    </location>
</feature>
<feature type="modified residue" description="N6-acetyllysine" evidence="4">
    <location>
        <position position="3056"/>
    </location>
</feature>
<feature type="modified residue" description="N6-acetyllysine" evidence="2">
    <location>
        <position position="3094"/>
    </location>
</feature>
<feature type="modified residue" description="Phosphotyrosine" evidence="4">
    <location>
        <position position="3365"/>
    </location>
</feature>
<feature type="modified residue" description="N6-acetyllysine" evidence="2">
    <location>
        <position position="3423"/>
    </location>
</feature>
<feature type="modified residue" description="Phosphoserine" evidence="13">
    <location>
        <position position="3583"/>
    </location>
</feature>
<feature type="modified residue" description="Phosphothreonine" evidence="2">
    <location>
        <position position="3788"/>
    </location>
</feature>
<feature type="modified residue" description="Phosphotyrosine" evidence="4">
    <location>
        <position position="3793"/>
    </location>
</feature>
<feature type="modified residue" description="Phosphothreonine" evidence="12 13">
    <location>
        <position position="4033"/>
    </location>
</feature>
<feature type="modified residue" description="Phosphoserine" evidence="2">
    <location>
        <position position="4057"/>
    </location>
</feature>
<feature type="modified residue" description="Phosphoserine" evidence="2">
    <location>
        <position position="4385"/>
    </location>
</feature>
<feature type="modified residue" description="Phosphoserine" evidence="12">
    <location>
        <position position="4387"/>
    </location>
</feature>
<feature type="modified residue" description="Phosphoserine" evidence="12">
    <location>
        <position position="4388"/>
    </location>
</feature>
<feature type="modified residue" description="Phosphoserine" evidence="12 13">
    <location>
        <position position="4389"/>
    </location>
</feature>
<feature type="modified residue" description="Phosphoserine" evidence="12 13">
    <location>
        <position position="4392"/>
    </location>
</feature>
<feature type="modified residue" description="Phosphoserine" evidence="2">
    <location>
        <position position="4393"/>
    </location>
</feature>
<feature type="modified residue" description="Phosphoserine" evidence="12">
    <location>
        <position position="4394"/>
    </location>
</feature>
<feature type="modified residue" description="Phosphoserine" evidence="2">
    <location>
        <position position="4395"/>
    </location>
</feature>
<feature type="modified residue" description="Phosphotyrosine" evidence="2">
    <location>
        <position position="4396"/>
    </location>
</feature>
<feature type="modified residue" description="Phosphoserine" evidence="2">
    <location>
        <position position="4399"/>
    </location>
</feature>
<feature type="modified residue" description="Phosphoserine" evidence="13">
    <location>
        <position position="4409"/>
    </location>
</feature>
<feature type="modified residue" description="Phosphothreonine" evidence="2">
    <location>
        <position position="4414"/>
    </location>
</feature>
<feature type="modified residue" description="Phosphothreonine; by CDK1" evidence="3">
    <location>
        <position position="4542"/>
    </location>
</feature>
<feature type="modified residue" description="Phosphoserine" evidence="2">
    <location>
        <position position="4610"/>
    </location>
</feature>
<feature type="modified residue" description="Phosphoserine" evidence="13">
    <location>
        <position position="4616"/>
    </location>
</feature>
<feature type="modified residue" description="Phosphotyrosine" evidence="4">
    <location>
        <position position="4618"/>
    </location>
</feature>
<feature type="modified residue" description="Phosphoserine" evidence="2">
    <location>
        <position position="4619"/>
    </location>
</feature>
<feature type="modified residue" description="Phosphoserine" evidence="2">
    <location>
        <position position="4621"/>
    </location>
</feature>
<feature type="modified residue" description="Phosphoserine" evidence="2">
    <location>
        <position position="4625"/>
    </location>
</feature>
<feature type="modified residue" description="Phosphothreonine" evidence="4">
    <location>
        <position position="4626"/>
    </location>
</feature>
<feature type="modified residue" description="Phosphoserine" evidence="13">
    <location>
        <position position="4629"/>
    </location>
</feature>
<feature type="modified residue" description="Omega-N-methylarginine" evidence="4">
    <location>
        <position position="4630"/>
    </location>
</feature>
<feature type="modified residue" description="Omega-N-methylarginine" evidence="2">
    <location>
        <position position="4643"/>
    </location>
</feature>
<feature type="modified residue" description="Phosphoserine" evidence="2">
    <location>
        <position position="4645"/>
    </location>
</feature>
<feature type="modified residue" description="Phosphoserine" evidence="2">
    <location>
        <position position="4678"/>
    </location>
</feature>
<feature type="splice variant" id="VSP_005050" description="In isoform 2." evidence="11">
    <original>MVAGMLMPLDQLRAIYEVLFREGVMVAKKDRRPRSLHPHVPGVTNLQVMRAMTSLKARGLVRETFAWCHFYWYLTNEGIDHLRQYLHLPPEIVPASLQRVRRPVAMVMPARRRSPHVQTMQGPLGCPPKRGPLPAEDPAREERQVYRRKEREEGAPETPVVSATIVGTLARPGPEPTPAT</original>
    <variation>MSQQRLRVPEPEGLGSKRTSSEDNLYLAVLRASEGKK</variation>
    <location>
        <begin position="1"/>
        <end position="180"/>
    </location>
</feature>
<feature type="splice variant" id="VSP_005051" description="In isoform 3." evidence="11">
    <original>MVAGMLMPLDQLRAIYEVLFREGVMVAKKDRRPRSLHPHVPGVTNLQVMRAMTSLKARGLVRETFAWCHFYWYLTNEGIDHLRQYLHLPPEIVPASLQRVRRPVAMVMPARRRSPHVQTMQGPLGCPPKRGPLPAEDPAREERQVYRRKEREEGAPETPVVSATIVGTLARPGPEPTPAT</original>
    <variation>MEPSGSLFPSLVVVGHVVSLAAVWHWRKGHRQAQDEQ</variation>
    <location>
        <begin position="1"/>
        <end position="180"/>
    </location>
</feature>
<feature type="splice variant" id="VSP_005052" description="In isoform 4." evidence="11">
    <original>MVAGMLMPLDQLRAIYEVLFREGVMVAKKDRRPRSLHPHVPGVTNLQVMRAMTSLKARGLVRETFAWCHFYWYLTNEGIDHLRQYLHLPPEIVPASLQRVRRPVAMVMPARRRSPHVQTMQGPLGCPPKRGPLPAEDPAREERQVYRRKEREEGAPETPVVSATIVGTLARPGPEPTPAT</original>
    <variation>DVSNGSSGSPSPGDTLPWNLGKTQRSRRSGGGSVGNGSVLDPAERAVIRIA</variation>
    <location>
        <begin position="1"/>
        <end position="180"/>
    </location>
</feature>
<feature type="modified residue" description="Phosphoserine" evidence="13">
    <location sequence="P30427-2">
        <position position="21"/>
    </location>
</feature>
<feature type="modified residue" description="Phosphotyrosine" evidence="4">
    <location sequence="P30427-2">
        <position position="26"/>
    </location>
</feature>
<sequence>MVAGMLMPLDQLRAIYEVLFREGVMVAKKDRRPRSLHPHVPGVTNLQVMRAMTSLKARGLVRETFAWCHFYWYLTNEGIDHLRQYLHLPPEIVPASLQRVRRPVAMVMPARRRSPHVQTMQGPLGCPPKRGPLPAEDPAREERQVYRRKEREEGAPETPVVSATIVGTLARPGPEPTPATDERDRVQKKTSTKWVNKHLIKAQRHISDLYEDLRDGHNLISLLEVLSGDSLPREKGRMRFHKLQNVQIALDYLRHRQVKLVNIRNDDIADGNPKLTLGLIWTIILHFKISDIQVSGQSEDMTAKEKLLLWSQRMVEGYQGLRCDNFTTSWRDGRLFNAIIHRHKPMLIDMNKVYRQTNLENLDQAFSVAERDLGVTRLLDPEDVDVPQPDEKSIITYVSSLYDAMPRVPGAQDGVRANELQLRWQEYRELVLLLLQWIRHHTAAFEERKFPSSFEEIEILWCQFLKFKETELPAKEADKNRSKGIYQSLEGAVQAGQLKIPPGYHPLDVEKEWGKLHVAILEREKQLRSEFERLECLQRIVSKLQMEAGLCEEQLYQADSLLQSDIRLLASGKAAQRAGEVERDLDKADGMIRLLFNDVQTLKDGRHPQGEQMYRRVYRLHERLVAIRTEYNLRLKAGVGAPVTQVTLQSTQRRPELEDSTLRYLHDLLAWVEENQRRIDGAEWGVDLPSVEAQLGSHRGMHQSIEEFRAKIERARNDESQLSPATRGAYRDCLGRLDLQYAKLLNSSKARLRSLESLHGFVAAATKELMWLNEKEEEEVGFDWSDRNTNMAAKKESYSALMRELEMKEKKIKEIQNTGDRLLREDHPARPTVESFQAALQTQWSWMLQLCCCIEAHLKENTAYFQFFSDVREAEEQLQKLQETLRRKYSCDRSITVTRLEDLLQDAQDEKEQLNEYKGHLSGLAKRAKAIVQLKPRNPAHPVRGHVPLLAVCDYKQVEVTVHKGDQCQLVGPAQPFHWKVLSSSGSEAAVPSVCFLVPPPNQEAQEAVARLEAQHQALVTLWHQLHVDMKSLLAWQSLNRDIQLIRSWSLVTFRTLKPEEQRQALRNLELHYQAFLRDSQDAGGFGPEDRLVAEREYGSCSRHYQQLLQSLEQGEQEESRCQRCISELKDIRLQLEACETRTVHRLRLPLDKDPARECAQRIAEQQKAQAEVEGLGKGVARLSAEAEKVLALPEPSPAAPTLRSELELTLGKLEQVRSLSAIYLEKLKTISLVIRSTQGAEEVLKTHEEHLKEAQAVPATLQELEVTKASLKKLRAQAEAQQPVFNTLRDELRGAQEVGERLQQRHGERDVEVERWRERVTQLLERWQAVLAQTDVRQRELEQLGRQLRYYRESADPLSSWLQDAKSRQEQIQAVPIANSQAAREQLRQEKALLEEIERHGEKVEECQKFAKQYINAIKDYELQLITYKAQLEPVASPAKKPKVQSGSESVIQEYVDLRTRYSELTTLTSQYIKFISETLRRMEEEERLAEQQRAEERERLAEVEAALEKQRQLAEAHAQAKAQAELEARELQRRMQEEVTRREEAAVDAQQQKRSIQEELQHLRQSSEAEIQAKAQQVEAAERSRMRIEEEIRVVRLQLETTERQRGGAEDELQALRARAEEAEAQKRQAQEEAERLRRQVQDESQRKRQAEAELALRVKAEAEAAREKQRALQALDELKLQAEEAERWLCQAEAERARQVQVALETAQRSAEVELQSKRPSFAEKTAQLERTLQEEHVTVTQLREEAERRAQQQAEAERAREEAERELERWQLKANEALRLRLQAEEVAQQKSLAQADAEKQKEEAEREARRRGKAEEQAVRQRELAEQELEKQRQLTEGTAQQRLAAEQELIRLRAETEQGEHQRQLLEEELARLQHEATAATQKRQELEAELAKVRAEMEVLLASKARAEEESRSTSEKSKQRLEAEAGRFRELAEEAARLRALAEEARRHRELAEEDAARQRAEADGVLTEKLAAISEATRLKTEAEIALKEKEAENERLRRLAEDEAFQRRRLEEQAAQHKADIEERLAQLRKASESELERQKGLVEDTLRQRRQVEEEIMALKASFEKAAAGKAELELELGRIRSNAEDTMRSKELAEQEAARQRQLAAEEEQRRREAEERVQRSLAAEEEAARQRKVALEEVERLKAKVEEARRLRERAEQESARQLQLAQEAAQKRLQAEEKAHAFVVQQREEELQQTLQQEQNMLERLRSEAEAARRAAEEAEEAREQAEREAAQSRKQVEEAERLKQSAEEQAQAQAQAQAAAEKLRKEAEQEAARRAQAEQAALKQKQAADAEMEKHKKFAEQTLRQKAQVEQELTTLRLQLEETDHQKSILDEELQRLKAEVTEAARQRSQVEEELFSVRVQMEELGKLKARIEAENRALILRDKDNTQRFLEEEAEKMKQVAEEAARLSVAAQEAARLRQLAEEDLAQQRALAEKMLKEKMQAVQEATRLKAEAELLQQQKELAQEQARRLQADKEQMAQQLVEETQGFQRTLEAERQRQLEMSAEAERLKLRMAEMSRAQARAEEDAQRFRKQAEEIGEKLHRTELATQEKVTLVQTLEIQRQQSDQDAERLREAIAELEREKEKLKQEAKLLQLKSEEMQTVQQEQILQETQALQKSFLSEKDSLLQRERFIEQEKAKLEQLFQDEVAKAKQLQEEQQRQQQQMEQEKQELVASMEEARRRQREAEEGVRRKQEELQRLEQQRQQQEKLLAEENQRLRERLQRLEEEHRAALAHSEEIATSQAAATKALPNGRDALDGPSMEAEPEYTFEGLRQKVPAQQLQEAGILSMEELQRLTQGHTTVAELTQREDVRHYLKGGSSIAGLLLKPTNEKLSVYTALQRQLLSPGTALILLEAQAASGFLLDPVRNRRLTVNEAVKEGVVGPELHHKLLSAERAVTGYKDPYTGEQISLFQAMKKDLIVRDHGIRLLEAQIATGGIIDPVHSHRVPVDVAYQRGYFDEEMNRVLADPSDDTKGFFDPNTHENLTYLQLLERCVEDPETGLRLLPLTDKAAKGGELVYTDTEARDVFEKATVSAPFGKFQGKTVTIWEIINSEYFTAEQRRDLLRQFRTGRITVEKIIKIVITVVEEHERKGQLCFEGLRALVPAAELLDSGVISHEVYQQLQRGERSVREVAEADEVRQALRGTSVIAGVWLEEAGQKLSIYEALRRDLLQPEVAVALLEAQAGTGHIIDPATSARLTVDEAVRAGLVGPEMHEKLLSAEKAVTGYRDPYSGQSVSLFQALKKGLIPREQGLRLLDAQLSTGGIVDPSKSHRVPLDVAYARGYLDKETNRALTSPRDDARVYLDPSTREPVTYSQLQQRCRSDQLTGLSLLPLSEKAVRARQEEVYSELQARETLEKAKVEVPVGGFKGRALTVWELISSEYFTEEQRQELLRQFRTGKVTVEKVIKILITIVEEVETQRQERLSFSGLRAPVPASELLASKILSRTQFEQLKDGKTSVKDLSEVGSVRTLLQGSGCLAGIYLEDSKEKVTIYEAMRRGLLRASTATLLLEAQAATGFLVDPVRNQRLYVHEAVKAGVVGPELHEKLLSAEKAVTGYKDPYSGSTISLFQAMKKGLVLRDHAIRLLEAQIATGGIIDPVHSHRLPVDVAYQRGYFDEEMNRVLADPSDDTKGFFDPNTHENLTYLQLLERCVEDPETGLRLLPLRGAEKTEVVETTQVYTEEETRRAFEETQIDIPGGGSHGGSSMSLWEVMQSDMIPEDQRARLMADFQAGRVTKERMIIIIIEIIEKTEIIRQQNLASYDYVRRRLTAEDLYEARIISLETYNLFREGTKSLREVLEMESAWRYLYGTGSVAGVYLPGSRQTLTIYQALKKGLLSAEVARLLLEAQAATGFLLDPVKGERLTVDEAVRKGLVGPELHDRLLSAERAVTGYRDPYTEQPISLFQAMKKELIPAEEALRLLDAQLATGGIVDPRLGFHLPLEVAYQRGYLNKDTHDQLSEPSEVRSYVDPSTDERLSYTQLLKRCRRDDNSGQMLLPLSDARKLTFRGLRKQITVEELVRSQVMDEATALQLQEGLTSIEEVTKNLQKFLEGTSCIAGVFVDATKERLSVYQAMKKGIIRPGTAFELLEAQAATGYVIDPIKGLKLTVEEAVRMGIVGPEFKDKLLSAERAVTGYKDPYSGKLISLFQAMKKGLILKDHGIRLLEAQIATGGIIDPEESHRLPVEVAYKRGLFDEEMNEILTDPSDDTKGFFDPNTEENLTYLQLMERCITDPQTGLCLLPLKEKKRERKTSSKSSVRKRRVVIVDPETGKEMSVYEAYRKGLIDHQTYLELSEQECEWEEITISSSDGVVKSMIIDRRSGRQYDIGDAITKNLIDRSALDQYRAGTLSITEFADMLSGNAGGFRSRSSSVGSSSSYPISSAVPRTQLASWSDPTEETGPVAGILDTETLEKVSITEAMHRNLVDNITGQRLLEAQACTGGIIDPSTGERFPVTEAVNKGLVDKIMVDRINLAQKAFCGFEDPRTKTKMSAAQALKKGWLYYEAGQRFLEVQYLTGGLIEPDTPGRVSLDEALQRGTVDARTAQKLRDVSAYSKYLTCPKTKLKISYKDALDRSMVEEGTGLRLLEAAAQSSKGYYSPYSVSGSGSTAGSRTGSRTGSRAGSRRGSFDATGSGFSMTFSSSSYSSSGYGRRYASGPSASLGGPESAVA</sequence>
<organism>
    <name type="scientific">Rattus norvegicus</name>
    <name type="common">Rat</name>
    <dbReference type="NCBI Taxonomy" id="10116"/>
    <lineage>
        <taxon>Eukaryota</taxon>
        <taxon>Metazoa</taxon>
        <taxon>Chordata</taxon>
        <taxon>Craniata</taxon>
        <taxon>Vertebrata</taxon>
        <taxon>Euteleostomi</taxon>
        <taxon>Mammalia</taxon>
        <taxon>Eutheria</taxon>
        <taxon>Euarchontoglires</taxon>
        <taxon>Glires</taxon>
        <taxon>Rodentia</taxon>
        <taxon>Myomorpha</taxon>
        <taxon>Muroidea</taxon>
        <taxon>Muridae</taxon>
        <taxon>Murinae</taxon>
        <taxon>Rattus</taxon>
    </lineage>
</organism>
<accession>P30427</accession>
<accession>O08879</accession>
<accession>O08880</accession>
<accession>O08881</accession>
<gene>
    <name type="primary">Plec</name>
    <name type="synonym">Plec1</name>
</gene>
<keyword id="KW-0007">Acetylation</keyword>
<keyword id="KW-0009">Actin-binding</keyword>
<keyword id="KW-0025">Alternative splicing</keyword>
<keyword id="KW-0965">Cell junction</keyword>
<keyword id="KW-0966">Cell projection</keyword>
<keyword id="KW-0175">Coiled coil</keyword>
<keyword id="KW-0963">Cytoplasm</keyword>
<keyword id="KW-0206">Cytoskeleton</keyword>
<keyword id="KW-0488">Methylation</keyword>
<keyword id="KW-0597">Phosphoprotein</keyword>
<keyword id="KW-1185">Reference proteome</keyword>
<keyword id="KW-0677">Repeat</keyword>
<keyword id="KW-0728">SH3 domain</keyword>
<evidence type="ECO:0000250" key="1"/>
<evidence type="ECO:0000250" key="2">
    <source>
        <dbReference type="UniProtKB" id="Q15149"/>
    </source>
</evidence>
<evidence type="ECO:0000250" key="3">
    <source>
        <dbReference type="UniProtKB" id="Q9JI55"/>
    </source>
</evidence>
<evidence type="ECO:0000250" key="4">
    <source>
        <dbReference type="UniProtKB" id="Q9QXS1"/>
    </source>
</evidence>
<evidence type="ECO:0000255" key="5"/>
<evidence type="ECO:0000255" key="6">
    <source>
        <dbReference type="PROSITE-ProRule" id="PRU00044"/>
    </source>
</evidence>
<evidence type="ECO:0000255" key="7">
    <source>
        <dbReference type="PROSITE-ProRule" id="PRU00192"/>
    </source>
</evidence>
<evidence type="ECO:0000256" key="8">
    <source>
        <dbReference type="SAM" id="MobiDB-lite"/>
    </source>
</evidence>
<evidence type="ECO:0000269" key="9">
    <source>
    </source>
</evidence>
<evidence type="ECO:0000269" key="10">
    <source>
    </source>
</evidence>
<evidence type="ECO:0000305" key="11"/>
<evidence type="ECO:0007744" key="12">
    <source>
    </source>
</evidence>
<evidence type="ECO:0007744" key="13">
    <source>
    </source>
</evidence>
<name>PLEC_RAT</name>
<comment type="function">
    <text>Interlinks intermediate filaments with microtubules and microfilaments and anchors intermediate filaments to desmosomes or hemidesmosomes. May be involved not only in the cross-linking and stabilization of cytoskeletal intermediate filaments network, but also in the regulation of their dynamics.</text>
</comment>
<comment type="subunit">
    <text evidence="1 4 9">Homodimer or homotetramer (By similarity). Interacts (via actin-binding domain) with SYNE3. Interacts (via calponin-homology (CH) 1 domain) with VIM (via rod region). Interacts (via N-terminus) with DST isoform 2 (via N-terminus). Interacts with FER. Interacts with TOR1A (By similarity). Interacts with ANK3 (PubMed:21223964). Identified in complexes that contain VIM, EZR, AHNAK, BFSP1, BFSP2, ANK2, PLEC, PRX and spectrin (By similarity).</text>
</comment>
<comment type="subcellular location">
    <subcellularLocation>
        <location evidence="2">Cytoplasm</location>
        <location evidence="2">Cytoskeleton</location>
    </subcellularLocation>
    <subcellularLocation>
        <location evidence="2">Cell junction</location>
        <location evidence="2">Hemidesmosome</location>
    </subcellularLocation>
    <subcellularLocation>
        <location evidence="4">Cell projection</location>
        <location evidence="4">Podosome</location>
    </subcellularLocation>
    <text evidence="4">Localized to the cortex of myotube podosomes.</text>
</comment>
<comment type="alternative products">
    <event type="alternative splicing"/>
    <isoform>
        <id>P30427-1</id>
        <name>1</name>
        <sequence type="displayed"/>
    </isoform>
    <isoform>
        <id>P30427-2</id>
        <name>2</name>
        <sequence type="described" ref="VSP_005050"/>
    </isoform>
    <isoform>
        <id>P30427-3</id>
        <name>3</name>
        <sequence type="described" ref="VSP_005051"/>
    </isoform>
    <isoform>
        <id>P30427-4</id>
        <name>4</name>
        <sequence type="described" ref="VSP_005052"/>
    </isoform>
</comment>
<comment type="tissue specificity">
    <text evidence="10">Widely expressed with highest expression in skeletal muscle and lowest in thymus.</text>
</comment>
<comment type="domain">
    <text>The N-terminus interacts with actin, the C-terminus with vimentin, desmin, GFAP, cytokeratins, lamin B; whereas both the N- and the C-terminus can bind integrin beta-4.</text>
</comment>
<comment type="PTM">
    <text evidence="1">Phosphorylated by CDK1; regulates dissociation from intermediate filaments during mitosis. Isoform 2 is phosphorylated on Ser-21 and Tyr-26 (By similarity).</text>
</comment>
<comment type="miscellaneous">
    <molecule>Isoform 4</molecule>
    <text evidence="11">Incomplete sequence.</text>
</comment>
<comment type="similarity">
    <text evidence="11">Belongs to the plakin or cytolinker family.</text>
</comment>